<keyword id="KW-0963">Cytoplasm</keyword>
<keyword id="KW-0275">Fatty acid biosynthesis</keyword>
<keyword id="KW-0276">Fatty acid metabolism</keyword>
<keyword id="KW-0413">Isomerase</keyword>
<keyword id="KW-0444">Lipid biosynthesis</keyword>
<keyword id="KW-0443">Lipid metabolism</keyword>
<keyword id="KW-0456">Lyase</keyword>
<keyword id="KW-1185">Reference proteome</keyword>
<comment type="function">
    <text evidence="1">Necessary for the introduction of cis unsaturation into fatty acids. Catalyzes the dehydration of (3R)-3-hydroxydecanoyl-ACP to E-(2)-decenoyl-ACP and then its isomerization to Z-(3)-decenoyl-ACP. Can catalyze the dehydratase reaction for beta-hydroxyacyl-ACPs with saturated chain lengths up to 16:0, being most active on intermediate chain length.</text>
</comment>
<comment type="catalytic activity">
    <reaction evidence="1">
        <text>a (3R)-hydroxyacyl-[ACP] = a (2E)-enoyl-[ACP] + H2O</text>
        <dbReference type="Rhea" id="RHEA:13097"/>
        <dbReference type="Rhea" id="RHEA-COMP:9925"/>
        <dbReference type="Rhea" id="RHEA-COMP:9945"/>
        <dbReference type="ChEBI" id="CHEBI:15377"/>
        <dbReference type="ChEBI" id="CHEBI:78784"/>
        <dbReference type="ChEBI" id="CHEBI:78827"/>
        <dbReference type="EC" id="4.2.1.59"/>
    </reaction>
</comment>
<comment type="catalytic activity">
    <reaction evidence="1">
        <text>(3R)-hydroxydecanoyl-[ACP] = (2E)-decenoyl-[ACP] + H2O</text>
        <dbReference type="Rhea" id="RHEA:41860"/>
        <dbReference type="Rhea" id="RHEA-COMP:9638"/>
        <dbReference type="Rhea" id="RHEA-COMP:9639"/>
        <dbReference type="ChEBI" id="CHEBI:15377"/>
        <dbReference type="ChEBI" id="CHEBI:78466"/>
        <dbReference type="ChEBI" id="CHEBI:78467"/>
    </reaction>
</comment>
<comment type="catalytic activity">
    <reaction evidence="1">
        <text>(2E)-decenoyl-[ACP] = (3Z)-decenoyl-[ACP]</text>
        <dbReference type="Rhea" id="RHEA:23568"/>
        <dbReference type="Rhea" id="RHEA-COMP:9639"/>
        <dbReference type="Rhea" id="RHEA-COMP:9927"/>
        <dbReference type="ChEBI" id="CHEBI:78467"/>
        <dbReference type="ChEBI" id="CHEBI:78798"/>
        <dbReference type="EC" id="5.3.3.14"/>
    </reaction>
</comment>
<comment type="pathway">
    <text evidence="1">Lipid metabolism; fatty acid biosynthesis.</text>
</comment>
<comment type="subunit">
    <text evidence="1">Homodimer.</text>
</comment>
<comment type="subcellular location">
    <subcellularLocation>
        <location evidence="1">Cytoplasm</location>
    </subcellularLocation>
</comment>
<comment type="similarity">
    <text evidence="1">Belongs to the thioester dehydratase family. FabA subfamily.</text>
</comment>
<gene>
    <name evidence="1" type="primary">fabA</name>
    <name type="ordered locus">Mlg_1374</name>
</gene>
<proteinExistence type="inferred from homology"/>
<reference key="1">
    <citation type="submission" date="2006-08" db="EMBL/GenBank/DDBJ databases">
        <title>Complete sequence of Alkalilimnicola ehrilichei MLHE-1.</title>
        <authorList>
            <person name="Copeland A."/>
            <person name="Lucas S."/>
            <person name="Lapidus A."/>
            <person name="Barry K."/>
            <person name="Detter J.C."/>
            <person name="Glavina del Rio T."/>
            <person name="Hammon N."/>
            <person name="Israni S."/>
            <person name="Dalin E."/>
            <person name="Tice H."/>
            <person name="Pitluck S."/>
            <person name="Sims D."/>
            <person name="Brettin T."/>
            <person name="Bruce D."/>
            <person name="Han C."/>
            <person name="Tapia R."/>
            <person name="Gilna P."/>
            <person name="Schmutz J."/>
            <person name="Larimer F."/>
            <person name="Land M."/>
            <person name="Hauser L."/>
            <person name="Kyrpides N."/>
            <person name="Mikhailova N."/>
            <person name="Oremland R.S."/>
            <person name="Hoeft S.E."/>
            <person name="Switzer-Blum J."/>
            <person name="Kulp T."/>
            <person name="King G."/>
            <person name="Tabita R."/>
            <person name="Witte B."/>
            <person name="Santini J.M."/>
            <person name="Basu P."/>
            <person name="Hollibaugh J.T."/>
            <person name="Xie G."/>
            <person name="Stolz J.F."/>
            <person name="Richardson P."/>
        </authorList>
    </citation>
    <scope>NUCLEOTIDE SEQUENCE [LARGE SCALE GENOMIC DNA]</scope>
    <source>
        <strain>ATCC BAA-1101 / DSM 17681 / MLHE-1</strain>
    </source>
</reference>
<evidence type="ECO:0000255" key="1">
    <source>
        <dbReference type="HAMAP-Rule" id="MF_00405"/>
    </source>
</evidence>
<feature type="chain" id="PRO_0000267720" description="3-hydroxydecanoyl-[acyl-carrier-protein] dehydratase">
    <location>
        <begin position="1"/>
        <end position="176"/>
    </location>
</feature>
<feature type="active site" evidence="1">
    <location>
        <position position="70"/>
    </location>
</feature>
<accession>Q0A8W4</accession>
<sequence>MTRQESYNFDELLLSGHGRLFGPGNPQLPAPQMLMFHRITQMSEEGGAYDKGQVIAELDLDPDLWFFRCHFPGDPVMPGCLGLDALWQLVGFYLGWIGGSGKGRALGCGEVKFSGQILPEHKKVTYEIAFKRVINRRLVMGIADGWVSVDGEQIYTAKDLKVGLFQDPGDLSRSQG</sequence>
<name>FABA_ALKEH</name>
<organism>
    <name type="scientific">Alkalilimnicola ehrlichii (strain ATCC BAA-1101 / DSM 17681 / MLHE-1)</name>
    <dbReference type="NCBI Taxonomy" id="187272"/>
    <lineage>
        <taxon>Bacteria</taxon>
        <taxon>Pseudomonadati</taxon>
        <taxon>Pseudomonadota</taxon>
        <taxon>Gammaproteobacteria</taxon>
        <taxon>Chromatiales</taxon>
        <taxon>Ectothiorhodospiraceae</taxon>
        <taxon>Alkalilimnicola</taxon>
    </lineage>
</organism>
<dbReference type="EC" id="4.2.1.59" evidence="1"/>
<dbReference type="EC" id="5.3.3.14" evidence="1"/>
<dbReference type="EMBL" id="CP000453">
    <property type="protein sequence ID" value="ABI56723.1"/>
    <property type="molecule type" value="Genomic_DNA"/>
</dbReference>
<dbReference type="RefSeq" id="WP_011629118.1">
    <property type="nucleotide sequence ID" value="NC_008340.1"/>
</dbReference>
<dbReference type="SMR" id="Q0A8W4"/>
<dbReference type="KEGG" id="aeh:Mlg_1374"/>
<dbReference type="eggNOG" id="COG0764">
    <property type="taxonomic scope" value="Bacteria"/>
</dbReference>
<dbReference type="HOGENOM" id="CLU_097925_0_0_6"/>
<dbReference type="OrthoDB" id="9786735at2"/>
<dbReference type="UniPathway" id="UPA00094"/>
<dbReference type="Proteomes" id="UP000001962">
    <property type="component" value="Chromosome"/>
</dbReference>
<dbReference type="GO" id="GO:0005737">
    <property type="term" value="C:cytoplasm"/>
    <property type="evidence" value="ECO:0007669"/>
    <property type="project" value="UniProtKB-SubCell"/>
</dbReference>
<dbReference type="GO" id="GO:0019171">
    <property type="term" value="F:(3R)-hydroxyacyl-[acyl-carrier-protein] dehydratase activity"/>
    <property type="evidence" value="ECO:0007669"/>
    <property type="project" value="UniProtKB-UniRule"/>
</dbReference>
<dbReference type="GO" id="GO:0034017">
    <property type="term" value="F:trans-2-decenoyl-acyl-carrier-protein isomerase activity"/>
    <property type="evidence" value="ECO:0007669"/>
    <property type="project" value="UniProtKB-UniRule"/>
</dbReference>
<dbReference type="GO" id="GO:0006636">
    <property type="term" value="P:unsaturated fatty acid biosynthetic process"/>
    <property type="evidence" value="ECO:0007669"/>
    <property type="project" value="UniProtKB-UniRule"/>
</dbReference>
<dbReference type="CDD" id="cd01287">
    <property type="entry name" value="FabA"/>
    <property type="match status" value="1"/>
</dbReference>
<dbReference type="Gene3D" id="3.10.129.10">
    <property type="entry name" value="Hotdog Thioesterase"/>
    <property type="match status" value="1"/>
</dbReference>
<dbReference type="HAMAP" id="MF_00405">
    <property type="entry name" value="FabA"/>
    <property type="match status" value="1"/>
</dbReference>
<dbReference type="InterPro" id="IPR010083">
    <property type="entry name" value="FabA"/>
</dbReference>
<dbReference type="InterPro" id="IPR013114">
    <property type="entry name" value="FabA_FabZ"/>
</dbReference>
<dbReference type="InterPro" id="IPR029069">
    <property type="entry name" value="HotDog_dom_sf"/>
</dbReference>
<dbReference type="NCBIfam" id="TIGR01749">
    <property type="entry name" value="fabA"/>
    <property type="match status" value="1"/>
</dbReference>
<dbReference type="NCBIfam" id="NF003509">
    <property type="entry name" value="PRK05174.1"/>
    <property type="match status" value="1"/>
</dbReference>
<dbReference type="PANTHER" id="PTHR30272">
    <property type="entry name" value="3-HYDROXYACYL-[ACYL-CARRIER-PROTEIN] DEHYDRATASE"/>
    <property type="match status" value="1"/>
</dbReference>
<dbReference type="PANTHER" id="PTHR30272:SF8">
    <property type="entry name" value="3-HYDROXYDECANOYL-[ACYL-CARRIER-PROTEIN] DEHYDRATASE"/>
    <property type="match status" value="1"/>
</dbReference>
<dbReference type="Pfam" id="PF07977">
    <property type="entry name" value="FabA"/>
    <property type="match status" value="1"/>
</dbReference>
<dbReference type="SUPFAM" id="SSF54637">
    <property type="entry name" value="Thioesterase/thiol ester dehydrase-isomerase"/>
    <property type="match status" value="1"/>
</dbReference>
<protein>
    <recommendedName>
        <fullName evidence="1">3-hydroxydecanoyl-[acyl-carrier-protein] dehydratase</fullName>
        <ecNumber evidence="1">4.2.1.59</ecNumber>
    </recommendedName>
    <alternativeName>
        <fullName evidence="1">3-hydroxyacyl-[acyl-carrier-protein] dehydratase FabA</fullName>
    </alternativeName>
    <alternativeName>
        <fullName evidence="1">Beta-hydroxydecanoyl thioester dehydrase</fullName>
    </alternativeName>
    <alternativeName>
        <fullName evidence="1">Trans-2-decenoyl-[acyl-carrier-protein] isomerase</fullName>
        <ecNumber evidence="1">5.3.3.14</ecNumber>
    </alternativeName>
</protein>